<evidence type="ECO:0000255" key="1">
    <source>
        <dbReference type="HAMAP-Rule" id="MF_00241"/>
    </source>
</evidence>
<reference key="1">
    <citation type="submission" date="2007-11" db="EMBL/GenBank/DDBJ databases">
        <title>The genome sequence of the hyperthermophilic bacterium Thermotoga neapolitana.</title>
        <authorList>
            <person name="Lim S.K."/>
            <person name="Kim J.S."/>
            <person name="Cha S.H."/>
            <person name="Park B.C."/>
            <person name="Lee D.S."/>
            <person name="Tae H.S."/>
            <person name="Kim S.-J."/>
            <person name="Kim J.J."/>
            <person name="Park K.J."/>
            <person name="Lee S.Y."/>
        </authorList>
    </citation>
    <scope>NUCLEOTIDE SEQUENCE [LARGE SCALE GENOMIC DNA]</scope>
    <source>
        <strain>ATCC 49049 / DSM 4359 / NBRC 107923 / NS-E</strain>
    </source>
</reference>
<name>OGG1_THENN</name>
<feature type="chain" id="PRO_1000191874" description="8-oxoguanine DNA glycosylase/AP lyase">
    <location>
        <begin position="1"/>
        <end position="207"/>
    </location>
</feature>
<feature type="active site" evidence="1">
    <location>
        <position position="129"/>
    </location>
</feature>
<feature type="active site" evidence="1">
    <location>
        <position position="147"/>
    </location>
</feature>
<feature type="site" description="Important for guanine/8-oxoguanine distinction" evidence="1">
    <location>
        <position position="207"/>
    </location>
</feature>
<gene>
    <name evidence="1" type="primary">ogg</name>
    <name type="ordered locus">CTN_0753</name>
</gene>
<organism>
    <name type="scientific">Thermotoga neapolitana (strain ATCC 49049 / DSM 4359 / NBRC 107923 / NS-E)</name>
    <dbReference type="NCBI Taxonomy" id="309803"/>
    <lineage>
        <taxon>Bacteria</taxon>
        <taxon>Thermotogati</taxon>
        <taxon>Thermotogota</taxon>
        <taxon>Thermotogae</taxon>
        <taxon>Thermotogales</taxon>
        <taxon>Thermotogaceae</taxon>
        <taxon>Thermotoga</taxon>
    </lineage>
</organism>
<proteinExistence type="inferred from homology"/>
<accession>B9K7J6</accession>
<comment type="function">
    <text evidence="1">Catalyzes the excision of an oxidatively damaged form of guanine (7,8-dihydro-8-oxoguanine = 8-oxoG) from DNA. Also cleaves the DNA backbone at apurinic/apyrimidinic sites (AP sites).</text>
</comment>
<comment type="catalytic activity">
    <reaction evidence="1">
        <text>2'-deoxyribonucleotide-(2'-deoxyribose 5'-phosphate)-2'-deoxyribonucleotide-DNA = a 3'-end 2'-deoxyribonucleotide-(2,3-dehydro-2,3-deoxyribose 5'-phosphate)-DNA + a 5'-end 5'-phospho-2'-deoxyribonucleoside-DNA + H(+)</text>
        <dbReference type="Rhea" id="RHEA:66592"/>
        <dbReference type="Rhea" id="RHEA-COMP:13180"/>
        <dbReference type="Rhea" id="RHEA-COMP:16897"/>
        <dbReference type="Rhea" id="RHEA-COMP:17067"/>
        <dbReference type="ChEBI" id="CHEBI:15378"/>
        <dbReference type="ChEBI" id="CHEBI:136412"/>
        <dbReference type="ChEBI" id="CHEBI:157695"/>
        <dbReference type="ChEBI" id="CHEBI:167181"/>
        <dbReference type="EC" id="4.2.99.18"/>
    </reaction>
</comment>
<comment type="similarity">
    <text evidence="1">Belongs to the type-2 OGG1 family.</text>
</comment>
<sequence length="207" mass="24210">MEELLKELERIREEAKPLVEQRFEEFKRLGEEGTEEDLFCELSFCVLTANWSAEGGIRAQKEIGKGFVHLPLEELAEKLREVGHRYPQKRAEFIVENRKLLGKLKNLVKGDPFQSREFLVRNAKGIGWKEASHFLRNTGVEDLAILDKHVLRLMKRHGLIQEIPKGWSKKRYLYVEEILRKVAEAFGESPGKFDLYLWYLVKGKVDK</sequence>
<keyword id="KW-0227">DNA damage</keyword>
<keyword id="KW-0234">DNA repair</keyword>
<keyword id="KW-0326">Glycosidase</keyword>
<keyword id="KW-0378">Hydrolase</keyword>
<keyword id="KW-0456">Lyase</keyword>
<keyword id="KW-0511">Multifunctional enzyme</keyword>
<protein>
    <recommendedName>
        <fullName evidence="1">8-oxoguanine DNA glycosylase/AP lyase</fullName>
    </recommendedName>
    <domain>
        <recommendedName>
            <fullName evidence="1">8-oxoguanine DNA glycosylase</fullName>
            <shortName evidence="1">8-oxoG DNA glycosylase</shortName>
            <ecNumber evidence="1">3.2.2.-</ecNumber>
        </recommendedName>
    </domain>
    <domain>
        <recommendedName>
            <fullName evidence="1">DNA-(apurinic or apyrimidinic site) lyase</fullName>
            <shortName evidence="1">AP lyase</shortName>
            <ecNumber evidence="1">4.2.99.18</ecNumber>
        </recommendedName>
    </domain>
</protein>
<dbReference type="EC" id="3.2.2.-" evidence="1"/>
<dbReference type="EC" id="4.2.99.18" evidence="1"/>
<dbReference type="EMBL" id="CP000916">
    <property type="protein sequence ID" value="ACM22929.1"/>
    <property type="molecule type" value="Genomic_DNA"/>
</dbReference>
<dbReference type="RefSeq" id="WP_004082367.1">
    <property type="nucleotide sequence ID" value="NC_011978.1"/>
</dbReference>
<dbReference type="SMR" id="B9K7J6"/>
<dbReference type="STRING" id="309803.CTN_0753"/>
<dbReference type="KEGG" id="tna:CTN_0753"/>
<dbReference type="eggNOG" id="COG1059">
    <property type="taxonomic scope" value="Bacteria"/>
</dbReference>
<dbReference type="HOGENOM" id="CLU_104937_0_0_0"/>
<dbReference type="Proteomes" id="UP000000445">
    <property type="component" value="Chromosome"/>
</dbReference>
<dbReference type="GO" id="GO:0140078">
    <property type="term" value="F:class I DNA-(apurinic or apyrimidinic site) endonuclease activity"/>
    <property type="evidence" value="ECO:0007669"/>
    <property type="project" value="UniProtKB-EC"/>
</dbReference>
<dbReference type="GO" id="GO:0016799">
    <property type="term" value="F:hydrolase activity, hydrolyzing N-glycosyl compounds"/>
    <property type="evidence" value="ECO:0007669"/>
    <property type="project" value="UniProtKB-UniRule"/>
</dbReference>
<dbReference type="GO" id="GO:0006284">
    <property type="term" value="P:base-excision repair"/>
    <property type="evidence" value="ECO:0007669"/>
    <property type="project" value="UniProtKB-UniRule"/>
</dbReference>
<dbReference type="CDD" id="cd00056">
    <property type="entry name" value="ENDO3c"/>
    <property type="match status" value="1"/>
</dbReference>
<dbReference type="Gene3D" id="1.10.1670.10">
    <property type="entry name" value="Helix-hairpin-Helix base-excision DNA repair enzymes (C-terminal)"/>
    <property type="match status" value="1"/>
</dbReference>
<dbReference type="Gene3D" id="1.10.340.30">
    <property type="entry name" value="Hypothetical protein, domain 2"/>
    <property type="match status" value="1"/>
</dbReference>
<dbReference type="HAMAP" id="MF_00241">
    <property type="entry name" value="Ogg"/>
    <property type="match status" value="1"/>
</dbReference>
<dbReference type="InterPro" id="IPR012092">
    <property type="entry name" value="DNA_glyclase/AP_lyase_Ogg"/>
</dbReference>
<dbReference type="InterPro" id="IPR011257">
    <property type="entry name" value="DNA_glycosylase"/>
</dbReference>
<dbReference type="InterPro" id="IPR003265">
    <property type="entry name" value="HhH-GPD_domain"/>
</dbReference>
<dbReference type="InterPro" id="IPR023170">
    <property type="entry name" value="HhH_base_excis_C"/>
</dbReference>
<dbReference type="NCBIfam" id="NF002305">
    <property type="entry name" value="PRK01229.1"/>
    <property type="match status" value="1"/>
</dbReference>
<dbReference type="Pfam" id="PF22175">
    <property type="entry name" value="Ogg-HhH"/>
    <property type="match status" value="1"/>
</dbReference>
<dbReference type="PIRSF" id="PIRSF005954">
    <property type="entry name" value="Thrmst_ogg"/>
    <property type="match status" value="1"/>
</dbReference>
<dbReference type="SMART" id="SM00478">
    <property type="entry name" value="ENDO3c"/>
    <property type="match status" value="1"/>
</dbReference>
<dbReference type="SUPFAM" id="SSF48150">
    <property type="entry name" value="DNA-glycosylase"/>
    <property type="match status" value="1"/>
</dbReference>